<evidence type="ECO:0000269" key="1">
    <source>
    </source>
</evidence>
<evidence type="ECO:0000269" key="2">
    <source>
    </source>
</evidence>
<evidence type="ECO:0000269" key="3">
    <source>
    </source>
</evidence>
<evidence type="ECO:0000269" key="4">
    <source>
    </source>
</evidence>
<evidence type="ECO:0000269" key="5">
    <source>
    </source>
</evidence>
<evidence type="ECO:0007744" key="6">
    <source>
        <dbReference type="PDB" id="2P4T"/>
    </source>
</evidence>
<evidence type="ECO:0007744" key="7">
    <source>
        <dbReference type="PDB" id="2RK1"/>
    </source>
</evidence>
<evidence type="ECO:0007744" key="8">
    <source>
        <dbReference type="PDB" id="2RK2"/>
    </source>
</evidence>
<evidence type="ECO:0007829" key="9">
    <source>
        <dbReference type="PDB" id="2RH2"/>
    </source>
</evidence>
<name>DYR21_ECOLX</name>
<sequence>MERSSNEVSNPVAGNFVFPSNATFGMGDRVRKKSGAAWQGQIVGWYCTNLTPEGYAVESEAHPGSVQIYPVAALERIN</sequence>
<accession>P00383</accession>
<organism>
    <name type="scientific">Escherichia coli</name>
    <dbReference type="NCBI Taxonomy" id="562"/>
    <lineage>
        <taxon>Bacteria</taxon>
        <taxon>Pseudomonadati</taxon>
        <taxon>Pseudomonadota</taxon>
        <taxon>Gammaproteobacteria</taxon>
        <taxon>Enterobacterales</taxon>
        <taxon>Enterobacteriaceae</taxon>
        <taxon>Escherichia</taxon>
    </lineage>
</organism>
<dbReference type="EC" id="1.5.1.3"/>
<dbReference type="EMBL" id="K02118">
    <property type="protein sequence ID" value="AAA26083.1"/>
    <property type="molecule type" value="Genomic_DNA"/>
</dbReference>
<dbReference type="PIR" id="A91512">
    <property type="entry name" value="RDECD6"/>
</dbReference>
<dbReference type="RefSeq" id="WP_000442373.1">
    <property type="nucleotide sequence ID" value="NZ_OW968113.1"/>
</dbReference>
<dbReference type="PDB" id="1VIE">
    <property type="method" value="X-ray"/>
    <property type="resolution" value="1.70 A"/>
    <property type="chains" value="A=17-78"/>
</dbReference>
<dbReference type="PDB" id="1VIF">
    <property type="method" value="X-ray"/>
    <property type="resolution" value="1.80 A"/>
    <property type="chains" value="A=17-78"/>
</dbReference>
<dbReference type="PDB" id="2GQV">
    <property type="method" value="X-ray"/>
    <property type="resolution" value="1.10 A"/>
    <property type="chains" value="A=17-78"/>
</dbReference>
<dbReference type="PDB" id="2P4T">
    <property type="method" value="X-ray"/>
    <property type="resolution" value="1.15 A"/>
    <property type="chains" value="A=17-78"/>
</dbReference>
<dbReference type="PDB" id="2RH2">
    <property type="method" value="X-ray"/>
    <property type="resolution" value="0.96 A"/>
    <property type="chains" value="A=17-78"/>
</dbReference>
<dbReference type="PDB" id="2RK1">
    <property type="method" value="X-ray"/>
    <property type="resolution" value="1.26 A"/>
    <property type="chains" value="A=17-78"/>
</dbReference>
<dbReference type="PDB" id="2RK2">
    <property type="method" value="X-ray"/>
    <property type="resolution" value="1.90 A"/>
    <property type="chains" value="A=17-78"/>
</dbReference>
<dbReference type="PDB" id="3SFM">
    <property type="method" value="X-ray"/>
    <property type="resolution" value="1.40 A"/>
    <property type="chains" value="A=17-78"/>
</dbReference>
<dbReference type="PDB" id="6NXZ">
    <property type="method" value="X-ray"/>
    <property type="resolution" value="1.75 A"/>
    <property type="chains" value="A=17-78"/>
</dbReference>
<dbReference type="PDB" id="6NY0">
    <property type="method" value="X-ray"/>
    <property type="resolution" value="1.40 A"/>
    <property type="chains" value="A=18-78"/>
</dbReference>
<dbReference type="PDB" id="9CUM">
    <property type="method" value="X-ray"/>
    <property type="resolution" value="1.15 A"/>
    <property type="chains" value="A=17-78"/>
</dbReference>
<dbReference type="PDBsum" id="1VIE"/>
<dbReference type="PDBsum" id="1VIF"/>
<dbReference type="PDBsum" id="2GQV"/>
<dbReference type="PDBsum" id="2P4T"/>
<dbReference type="PDBsum" id="2RH2"/>
<dbReference type="PDBsum" id="2RK1"/>
<dbReference type="PDBsum" id="2RK2"/>
<dbReference type="PDBsum" id="3SFM"/>
<dbReference type="PDBsum" id="6NXZ"/>
<dbReference type="PDBsum" id="6NY0"/>
<dbReference type="PDBsum" id="9CUM"/>
<dbReference type="BMRB" id="P00383"/>
<dbReference type="SMR" id="P00383"/>
<dbReference type="CARD" id="ARO:3002864">
    <property type="molecule name" value="dfrB1"/>
    <property type="mechanism identifier" value="ARO:0001002"/>
    <property type="mechanism name" value="antibiotic target replacement"/>
</dbReference>
<dbReference type="BRENDA" id="1.5.1.3">
    <property type="organism ID" value="2026"/>
</dbReference>
<dbReference type="SABIO-RK" id="P00383"/>
<dbReference type="UniPathway" id="UPA00077">
    <property type="reaction ID" value="UER00158"/>
</dbReference>
<dbReference type="EvolutionaryTrace" id="P00383"/>
<dbReference type="GO" id="GO:0004146">
    <property type="term" value="F:dihydrofolate reductase activity"/>
    <property type="evidence" value="ECO:0007669"/>
    <property type="project" value="UniProtKB-EC"/>
</dbReference>
<dbReference type="GO" id="GO:0006730">
    <property type="term" value="P:one-carbon metabolic process"/>
    <property type="evidence" value="ECO:0007669"/>
    <property type="project" value="UniProtKB-KW"/>
</dbReference>
<dbReference type="GO" id="GO:0046677">
    <property type="term" value="P:response to antibiotic"/>
    <property type="evidence" value="ECO:0007669"/>
    <property type="project" value="UniProtKB-KW"/>
</dbReference>
<dbReference type="GO" id="GO:0031427">
    <property type="term" value="P:response to methotrexate"/>
    <property type="evidence" value="ECO:0007669"/>
    <property type="project" value="UniProtKB-KW"/>
</dbReference>
<dbReference type="GO" id="GO:0009410">
    <property type="term" value="P:response to xenobiotic stimulus"/>
    <property type="evidence" value="ECO:0007669"/>
    <property type="project" value="InterPro"/>
</dbReference>
<dbReference type="GO" id="GO:0046654">
    <property type="term" value="P:tetrahydrofolate biosynthetic process"/>
    <property type="evidence" value="ECO:0007669"/>
    <property type="project" value="UniProtKB-UniPathway"/>
</dbReference>
<dbReference type="Gene3D" id="2.30.30.60">
    <property type="match status" value="1"/>
</dbReference>
<dbReference type="InterPro" id="IPR009159">
    <property type="entry name" value="Dhfr_type_II"/>
</dbReference>
<dbReference type="InterPro" id="IPR008990">
    <property type="entry name" value="Elect_transpt_acc-like_dom_sf"/>
</dbReference>
<dbReference type="InterPro" id="IPR023408">
    <property type="entry name" value="MscS_beta-dom_sf"/>
</dbReference>
<dbReference type="NCBIfam" id="NF000331">
    <property type="entry name" value="trim_DfrB"/>
    <property type="match status" value="1"/>
</dbReference>
<dbReference type="Pfam" id="PF06442">
    <property type="entry name" value="DHFR_2"/>
    <property type="match status" value="1"/>
</dbReference>
<dbReference type="PIRSF" id="PIRSF000199">
    <property type="entry name" value="Dhfr_type_II"/>
    <property type="match status" value="1"/>
</dbReference>
<dbReference type="SUPFAM" id="SSF50090">
    <property type="entry name" value="Electron transport accessory proteins"/>
    <property type="match status" value="1"/>
</dbReference>
<geneLocation type="plasmid">
    <name>R67</name>
</geneLocation>
<comment type="function">
    <text>Key enzyme in folate metabolism. Catalyzes an essential reaction for de novo glycine and purine synthesis, and for DNA precursor synthesis.</text>
</comment>
<comment type="catalytic activity">
    <reaction>
        <text>(6S)-5,6,7,8-tetrahydrofolate + NADP(+) = 7,8-dihydrofolate + NADPH + H(+)</text>
        <dbReference type="Rhea" id="RHEA:15009"/>
        <dbReference type="ChEBI" id="CHEBI:15378"/>
        <dbReference type="ChEBI" id="CHEBI:57451"/>
        <dbReference type="ChEBI" id="CHEBI:57453"/>
        <dbReference type="ChEBI" id="CHEBI:57783"/>
        <dbReference type="ChEBI" id="CHEBI:58349"/>
        <dbReference type="EC" id="1.5.1.3"/>
    </reaction>
</comment>
<comment type="biophysicochemical properties">
    <kinetics>
        <KM evidence="1">5.8 uM for dihydrofolate</KM>
        <KM evidence="1">3 uM for NADPH</KM>
    </kinetics>
</comment>
<comment type="pathway">
    <text>Cofactor biosynthesis; tetrahydrofolate biosynthesis; 5,6,7,8-tetrahydrofolate from 7,8-dihydrofolate: step 1/1.</text>
</comment>
<comment type="subunit">
    <text evidence="1 2 3 4 5">Homotetramer.</text>
</comment>
<comment type="domain">
    <text evidence="2 5">The active site is situated at the inner surface of a pore formed by the four subunits.</text>
</comment>
<comment type="miscellaneous">
    <text>Type II plasmid-specified enzyme is practically insensitive to trimethoprim and methotrexate.</text>
</comment>
<protein>
    <recommendedName>
        <fullName>Dihydrofolate reductase type 2</fullName>
        <ecNumber>1.5.1.3</ecNumber>
    </recommendedName>
    <alternativeName>
        <fullName>Dihydrofolate reductase type II</fullName>
    </alternativeName>
</protein>
<feature type="chain" id="PRO_0000186435" description="Dihydrofolate reductase type 2">
    <location>
        <begin position="1"/>
        <end position="78"/>
    </location>
</feature>
<feature type="binding site" evidence="3 4 6 7 8">
    <location>
        <begin position="32"/>
        <end position="36"/>
    </location>
    <ligand>
        <name>NADP(+)</name>
        <dbReference type="ChEBI" id="CHEBI:58349"/>
    </ligand>
</feature>
<feature type="binding site" evidence="3 4 6 7 8">
    <location>
        <begin position="66"/>
        <end position="69"/>
    </location>
    <ligand>
        <name>NADP(+)</name>
        <dbReference type="ChEBI" id="CHEBI:58349"/>
    </ligand>
</feature>
<feature type="binding site" evidence="4 7">
    <location>
        <position position="68"/>
    </location>
    <ligand>
        <name>substrate</name>
    </ligand>
</feature>
<feature type="mutagenesis site" description="No effect." evidence="1">
    <original>S</original>
    <variation>A</variation>
    <location>
        <position position="65"/>
    </location>
</feature>
<feature type="mutagenesis site" description="Decreases affinity for NADPH and dihydrofolate about 9-fold." evidence="1">
    <original>Q</original>
    <variation>C</variation>
    <location>
        <position position="67"/>
    </location>
</feature>
<feature type="mutagenesis site" description="Increases affinity for dihydrofolate 36-fold. Increases affinity for NADPH 110-fold." evidence="1">
    <original>Q</original>
    <variation>H</variation>
    <location>
        <position position="67"/>
    </location>
</feature>
<feature type="mutagenesis site" description="Decreases affinity for dihydrofolate about 5-fold. Decreases affinity for NADPH about 7-fold." evidence="1">
    <original>I</original>
    <variation>L</variation>
    <variation>M</variation>
    <location>
        <position position="68"/>
    </location>
</feature>
<feature type="mutagenesis site" description="Decreases affinity for dihydrofolate about 9-fold. Decreases affinity for NADPH about 22-fold." evidence="1">
    <original>Y</original>
    <variation>F</variation>
    <location>
        <position position="69"/>
    </location>
</feature>
<feature type="mutagenesis site" description="Decreases affinity for dihydrofolate about 9-fold. Decreases affinity for NADPH about 60-fold." evidence="1">
    <original>Y</original>
    <variation>H</variation>
    <location>
        <position position="69"/>
    </location>
</feature>
<feature type="strand" evidence="9">
    <location>
        <begin position="29"/>
        <end position="36"/>
    </location>
</feature>
<feature type="strand" evidence="9">
    <location>
        <begin position="39"/>
        <end position="46"/>
    </location>
</feature>
<feature type="strand" evidence="9">
    <location>
        <begin position="52"/>
        <end position="62"/>
    </location>
</feature>
<feature type="strand" evidence="9">
    <location>
        <begin position="66"/>
        <end position="70"/>
    </location>
</feature>
<feature type="helix" evidence="9">
    <location>
        <begin position="71"/>
        <end position="73"/>
    </location>
</feature>
<feature type="strand" evidence="9">
    <location>
        <begin position="74"/>
        <end position="76"/>
    </location>
</feature>
<proteinExistence type="evidence at protein level"/>
<reference key="1">
    <citation type="journal article" date="1984" name="Gene">
        <title>Nucleotide sequence of the dihydrofolate-reductase gene borne by the plasmid R67 and conferring methotrexate resistance.</title>
        <authorList>
            <person name="Brisson N."/>
            <person name="Hohn T."/>
        </authorList>
    </citation>
    <scope>NUCLEOTIDE SEQUENCE [GENOMIC DNA]</scope>
</reference>
<reference key="2">
    <citation type="journal article" date="1979" name="J. Biol. Chem.">
        <title>The amino acid sequence of the trimethoprim-resistant dihydrofolate reductase specified in Escherichia coli by R-plasmid R67.</title>
        <authorList>
            <person name="Stone D."/>
            <person name="Smith S.L."/>
        </authorList>
    </citation>
    <scope>PROTEIN SEQUENCE</scope>
</reference>
<reference key="3">
    <citation type="journal article" date="2001" name="Biochemistry">
        <title>Role of S65, Q67, I68, and Y69 residues in homotetrameric R67 dihydrofolate reductase.</title>
        <authorList>
            <person name="Strader M.B."/>
            <person name="Smiley R.D."/>
            <person name="Stinnett L.G."/>
            <person name="VerBerkmoes N.C."/>
            <person name="Howell E.E."/>
        </authorList>
    </citation>
    <scope>BIOPHYSICOCHEMICAL PROPERTIES</scope>
    <scope>SUBUNIT</scope>
    <scope>IDENTIFICATION BY MASS SPECTROMETRY</scope>
    <scope>MUTAGENESIS OF SER-65; GLN-67; ILE-68 AND TYR-69</scope>
</reference>
<reference key="4">
    <citation type="journal article" date="1995" name="Nat. Struct. Biol.">
        <title>A plasmid-encoded dihydrofolate reductase from trimethoprim-resistant bacteria has a novel D2-symmetric active site.</title>
        <authorList>
            <person name="Narayana N."/>
            <person name="Matthews D.A."/>
            <person name="Howell E.E."/>
            <person name="Nguyen-Huu X."/>
        </authorList>
    </citation>
    <scope>X-RAY CRYSTALLOGRAPHY (1.7 ANGSTROMS) OF 17-78 IN COMPLEX WITH FOLATE</scope>
    <scope>DOMAIN</scope>
    <scope>SUBUNIT</scope>
</reference>
<reference key="5">
    <citation type="journal article" date="2006" name="Acta Crystallogr. D">
        <title>High-resolution structure of a plasmid-encoded dihydrofolate reductase: pentagonal network of water molecules in the D2-symmetric active site.</title>
        <authorList>
            <person name="Narayana N."/>
        </authorList>
    </citation>
    <scope>X-RAY CRYSTALLOGRAPHY (1.1 ANGSTROMS) OF 17-78 OF APOPROTEIN</scope>
    <scope>DOMAIN</scope>
    <scope>SUBUNIT</scope>
</reference>
<reference key="6">
    <citation type="journal article" date="2007" name="Biochemistry">
        <title>Crystal structure of a type II dihydrofolate reductase catalytic ternary complex.</title>
        <authorList>
            <person name="Krahn J.M."/>
            <person name="Jackson M.R."/>
            <person name="DeRose E.F."/>
            <person name="Howell E.E."/>
            <person name="London R.E."/>
        </authorList>
    </citation>
    <scope>X-RAY CRYSTALLOGRAPHY (0.96 ANGSTROMS) OF 17-78 IN COMPLEX WITH DIHYDROFOLATE AND NADP</scope>
</reference>
<reference key="7">
    <citation type="journal article" date="2007" name="Protein Sci.">
        <title>Structure of the Q67H mutant of R67 dihydrofolate reductase-NADP+ complex reveals a novel cofactor binding mode.</title>
        <authorList>
            <person name="Divya N."/>
            <person name="Grifith E."/>
            <person name="Narayana N."/>
        </authorList>
    </citation>
    <scope>X-RAY CRYSTALLOGRAPHY (1.15 ANGSTROMS) OF 17-78 OF MUTANT HIS-67 IN COMPLEX WITH NADP</scope>
</reference>
<keyword id="KW-0002">3D-structure</keyword>
<keyword id="KW-0046">Antibiotic resistance</keyword>
<keyword id="KW-0903">Direct protein sequencing</keyword>
<keyword id="KW-0487">Methotrexate resistance</keyword>
<keyword id="KW-0521">NADP</keyword>
<keyword id="KW-0554">One-carbon metabolism</keyword>
<keyword id="KW-0560">Oxidoreductase</keyword>
<keyword id="KW-0614">Plasmid</keyword>
<keyword id="KW-0817">Trimethoprim resistance</keyword>